<comment type="subcellular location">
    <subcellularLocation>
        <location evidence="3">Mitochondrion membrane</location>
        <topology evidence="3">Multi-pass membrane protein</topology>
    </subcellularLocation>
</comment>
<comment type="similarity">
    <text evidence="5">Belongs to the major facilitator superfamily. Sugar transporter (TC 2.A.1.1) family.</text>
</comment>
<name>GHT8_SCHPO</name>
<accession>Q9P3U7</accession>
<sequence length="547" mass="60176">MGKTLTIVMLVFVSMAGWMFGADTGSIGGITNMRDFQSRFADRYNPVTDTYSYSSARQGLITGMVNVGSMTGCILSSPLMDRIGKRVSIMFWTIVYLIGIILQVTAVPSWVQIMVAKIWTGLAIGALSVLAPGFQSEVAPATLRGTIVTTYQLAVTGGIFIAACINMGTHKLHKTAQWRVSMGINLLWGIIMFIGISFLPESPRYLIAIGKDEEALDIMCKNNVLPREHEIIQTEYHVIKTDCEAEMAGGPATWGDILGADIRYRTFLGLGVMSLQQLTGDNYYFYYGFEVFEGTGMNSPYLSALILDAVNFGCTFGGLFVLEFFGRRMPLIIGGVWQSITFFIYAAVGNRALTRKNGTSNHRAGAVMIVFSCLFIFSFAQTWGPAAYVIVGESYPIRYRSKCAAVATTGNWLWGFLITFFTPFISDSIGFKYGYIFAACNLCAACIIFLFAHETKGLTLEEINELYLSGAKPWMPRPENLGQAAKQQQEVLEKSRGVQGESAAHLENVDNEGMEDTSSNDITSSTSSSEGRAKPESNYVDEQDRYA</sequence>
<feature type="transit peptide" description="Mitochondrion" evidence="1">
    <location>
        <begin position="1"/>
        <end position="21"/>
    </location>
</feature>
<feature type="chain" id="PRO_0000310744" description="Probable high-affinity hexose transporter ght8, mitochondrial">
    <location>
        <begin position="22"/>
        <end position="547"/>
    </location>
</feature>
<feature type="topological domain" description="Mitochondrial intermembrane" evidence="1">
    <location>
        <begin position="22"/>
        <end position="86"/>
    </location>
</feature>
<feature type="transmembrane region" description="Helical" evidence="1">
    <location>
        <begin position="87"/>
        <end position="107"/>
    </location>
</feature>
<feature type="topological domain" description="Cytoplasmic" evidence="1">
    <location>
        <begin position="108"/>
        <end position="112"/>
    </location>
</feature>
<feature type="transmembrane region" description="Helical" evidence="1">
    <location>
        <begin position="113"/>
        <end position="133"/>
    </location>
</feature>
<feature type="topological domain" description="Mitochondrial intermembrane" evidence="1">
    <location>
        <begin position="134"/>
        <end position="144"/>
    </location>
</feature>
<feature type="transmembrane region" description="Helical" evidence="1">
    <location>
        <begin position="145"/>
        <end position="165"/>
    </location>
</feature>
<feature type="topological domain" description="Cytoplasmic" evidence="1">
    <location>
        <begin position="166"/>
        <end position="179"/>
    </location>
</feature>
<feature type="transmembrane region" description="Helical" evidence="1">
    <location>
        <begin position="180"/>
        <end position="200"/>
    </location>
</feature>
<feature type="topological domain" description="Mitochondrial intermembrane" evidence="1">
    <location>
        <begin position="201"/>
        <end position="304"/>
    </location>
</feature>
<feature type="transmembrane region" description="Helical" evidence="1">
    <location>
        <begin position="305"/>
        <end position="325"/>
    </location>
</feature>
<feature type="topological domain" description="Cytoplasmic" evidence="1">
    <location>
        <begin position="326"/>
        <end position="328"/>
    </location>
</feature>
<feature type="transmembrane region" description="Helical" evidence="1">
    <location>
        <begin position="329"/>
        <end position="349"/>
    </location>
</feature>
<feature type="topological domain" description="Mitochondrial intermembrane" evidence="1">
    <location>
        <begin position="350"/>
        <end position="363"/>
    </location>
</feature>
<feature type="transmembrane region" description="Helical" evidence="1">
    <location>
        <begin position="364"/>
        <end position="384"/>
    </location>
</feature>
<feature type="topological domain" description="Cytoplasmic" evidence="1">
    <location>
        <begin position="385"/>
        <end position="404"/>
    </location>
</feature>
<feature type="transmembrane region" description="Helical" evidence="1">
    <location>
        <begin position="405"/>
        <end position="425"/>
    </location>
</feature>
<feature type="topological domain" description="Mitochondrial intermembrane" evidence="1">
    <location>
        <begin position="426"/>
        <end position="432"/>
    </location>
</feature>
<feature type="transmembrane region" description="Helical" evidence="1">
    <location>
        <begin position="433"/>
        <end position="453"/>
    </location>
</feature>
<feature type="topological domain" description="Cytoplasmic" evidence="1">
    <location>
        <begin position="454"/>
        <end position="547"/>
    </location>
</feature>
<feature type="region of interest" description="Disordered" evidence="2">
    <location>
        <begin position="482"/>
        <end position="547"/>
    </location>
</feature>
<feature type="compositionally biased region" description="Low complexity" evidence="2">
    <location>
        <begin position="517"/>
        <end position="529"/>
    </location>
</feature>
<feature type="modified residue" description="Phosphoserine" evidence="4">
    <location>
        <position position="519"/>
    </location>
</feature>
<feature type="modified residue" description="Phosphothreonine" evidence="4">
    <location>
        <position position="523"/>
    </location>
</feature>
<feature type="modified residue" description="Phosphothreonine" evidence="4">
    <location>
        <position position="526"/>
    </location>
</feature>
<feature type="modified residue" description="Phosphoserine" evidence="4">
    <location>
        <position position="527"/>
    </location>
</feature>
<feature type="modified residue" description="Phosphoserine" evidence="4">
    <location>
        <position position="528"/>
    </location>
</feature>
<feature type="modified residue" description="Phosphoserine" evidence="4">
    <location>
        <position position="529"/>
    </location>
</feature>
<feature type="modified residue" description="Phosphoserine" evidence="4">
    <location>
        <position position="537"/>
    </location>
</feature>
<dbReference type="EMBL" id="CU329672">
    <property type="protein sequence ID" value="CAB94948.1"/>
    <property type="molecule type" value="Genomic_DNA"/>
</dbReference>
<dbReference type="RefSeq" id="NP_587746.1">
    <property type="nucleotide sequence ID" value="NM_001022740.2"/>
</dbReference>
<dbReference type="SMR" id="Q9P3U7"/>
<dbReference type="BioGRID" id="275868">
    <property type="interactions" value="3"/>
</dbReference>
<dbReference type="FunCoup" id="Q9P3U7">
    <property type="interactions" value="324"/>
</dbReference>
<dbReference type="STRING" id="284812.Q9P3U7"/>
<dbReference type="iPTMnet" id="Q9P3U7"/>
<dbReference type="PaxDb" id="4896-SPCC548.06c.1"/>
<dbReference type="EnsemblFungi" id="SPCC548.06c.1">
    <property type="protein sequence ID" value="SPCC548.06c.1:pep"/>
    <property type="gene ID" value="SPCC548.06c"/>
</dbReference>
<dbReference type="GeneID" id="2539300"/>
<dbReference type="KEGG" id="spo:2539300"/>
<dbReference type="PomBase" id="SPCC548.06c">
    <property type="gene designation" value="ght8"/>
</dbReference>
<dbReference type="VEuPathDB" id="FungiDB:SPCC548.06c"/>
<dbReference type="eggNOG" id="KOG0254">
    <property type="taxonomic scope" value="Eukaryota"/>
</dbReference>
<dbReference type="HOGENOM" id="CLU_001265_30_1_1"/>
<dbReference type="InParanoid" id="Q9P3U7"/>
<dbReference type="OMA" id="AMFKRTM"/>
<dbReference type="PhylomeDB" id="Q9P3U7"/>
<dbReference type="PRO" id="PR:Q9P3U7"/>
<dbReference type="Proteomes" id="UP000002485">
    <property type="component" value="Chromosome III"/>
</dbReference>
<dbReference type="GO" id="GO:0031966">
    <property type="term" value="C:mitochondrial membrane"/>
    <property type="evidence" value="ECO:0007669"/>
    <property type="project" value="UniProtKB-SubCell"/>
</dbReference>
<dbReference type="GO" id="GO:0005886">
    <property type="term" value="C:plasma membrane"/>
    <property type="evidence" value="ECO:0000314"/>
    <property type="project" value="PomBase"/>
</dbReference>
<dbReference type="GO" id="GO:0005351">
    <property type="term" value="F:carbohydrate:proton symporter activity"/>
    <property type="evidence" value="ECO:0000318"/>
    <property type="project" value="GO_Central"/>
</dbReference>
<dbReference type="GO" id="GO:0034219">
    <property type="term" value="P:carbohydrate transmembrane transport"/>
    <property type="evidence" value="ECO:0000305"/>
    <property type="project" value="PomBase"/>
</dbReference>
<dbReference type="GO" id="GO:0008643">
    <property type="term" value="P:carbohydrate transport"/>
    <property type="evidence" value="ECO:0000318"/>
    <property type="project" value="GO_Central"/>
</dbReference>
<dbReference type="CDD" id="cd17356">
    <property type="entry name" value="MFS_HXT"/>
    <property type="match status" value="1"/>
</dbReference>
<dbReference type="FunFam" id="1.20.1250.20:FF:000044">
    <property type="entry name" value="Hexose transporter Hxt3p"/>
    <property type="match status" value="1"/>
</dbReference>
<dbReference type="Gene3D" id="1.20.1250.20">
    <property type="entry name" value="MFS general substrate transporter like domains"/>
    <property type="match status" value="1"/>
</dbReference>
<dbReference type="InterPro" id="IPR020846">
    <property type="entry name" value="MFS_dom"/>
</dbReference>
<dbReference type="InterPro" id="IPR005828">
    <property type="entry name" value="MFS_sugar_transport-like"/>
</dbReference>
<dbReference type="InterPro" id="IPR050360">
    <property type="entry name" value="MFS_Sugar_Transporters"/>
</dbReference>
<dbReference type="InterPro" id="IPR036259">
    <property type="entry name" value="MFS_trans_sf"/>
</dbReference>
<dbReference type="InterPro" id="IPR003663">
    <property type="entry name" value="Sugar/inositol_transpt"/>
</dbReference>
<dbReference type="InterPro" id="IPR005829">
    <property type="entry name" value="Sugar_transporter_CS"/>
</dbReference>
<dbReference type="NCBIfam" id="TIGR00879">
    <property type="entry name" value="SP"/>
    <property type="match status" value="1"/>
</dbReference>
<dbReference type="PANTHER" id="PTHR48022:SF90">
    <property type="entry name" value="HIGH-AFFINITY GLUCONATE TRANSPORTER GHT3-RELATED"/>
    <property type="match status" value="1"/>
</dbReference>
<dbReference type="PANTHER" id="PTHR48022">
    <property type="entry name" value="PLASTIDIC GLUCOSE TRANSPORTER 4"/>
    <property type="match status" value="1"/>
</dbReference>
<dbReference type="Pfam" id="PF00083">
    <property type="entry name" value="Sugar_tr"/>
    <property type="match status" value="1"/>
</dbReference>
<dbReference type="PRINTS" id="PR00171">
    <property type="entry name" value="SUGRTRNSPORT"/>
</dbReference>
<dbReference type="SUPFAM" id="SSF103473">
    <property type="entry name" value="MFS general substrate transporter"/>
    <property type="match status" value="1"/>
</dbReference>
<dbReference type="PROSITE" id="PS50850">
    <property type="entry name" value="MFS"/>
    <property type="match status" value="1"/>
</dbReference>
<dbReference type="PROSITE" id="PS00216">
    <property type="entry name" value="SUGAR_TRANSPORT_1"/>
    <property type="match status" value="1"/>
</dbReference>
<evidence type="ECO:0000255" key="1"/>
<evidence type="ECO:0000256" key="2">
    <source>
        <dbReference type="SAM" id="MobiDB-lite"/>
    </source>
</evidence>
<evidence type="ECO:0000269" key="3">
    <source>
    </source>
</evidence>
<evidence type="ECO:0000269" key="4">
    <source>
    </source>
</evidence>
<evidence type="ECO:0000305" key="5"/>
<reference key="1">
    <citation type="journal article" date="2002" name="Nature">
        <title>The genome sequence of Schizosaccharomyces pombe.</title>
        <authorList>
            <person name="Wood V."/>
            <person name="Gwilliam R."/>
            <person name="Rajandream M.A."/>
            <person name="Lyne M.H."/>
            <person name="Lyne R."/>
            <person name="Stewart A."/>
            <person name="Sgouros J.G."/>
            <person name="Peat N."/>
            <person name="Hayles J."/>
            <person name="Baker S.G."/>
            <person name="Basham D."/>
            <person name="Bowman S."/>
            <person name="Brooks K."/>
            <person name="Brown D."/>
            <person name="Brown S."/>
            <person name="Chillingworth T."/>
            <person name="Churcher C.M."/>
            <person name="Collins M."/>
            <person name="Connor R."/>
            <person name="Cronin A."/>
            <person name="Davis P."/>
            <person name="Feltwell T."/>
            <person name="Fraser A."/>
            <person name="Gentles S."/>
            <person name="Goble A."/>
            <person name="Hamlin N."/>
            <person name="Harris D.E."/>
            <person name="Hidalgo J."/>
            <person name="Hodgson G."/>
            <person name="Holroyd S."/>
            <person name="Hornsby T."/>
            <person name="Howarth S."/>
            <person name="Huckle E.J."/>
            <person name="Hunt S."/>
            <person name="Jagels K."/>
            <person name="James K.D."/>
            <person name="Jones L."/>
            <person name="Jones M."/>
            <person name="Leather S."/>
            <person name="McDonald S."/>
            <person name="McLean J."/>
            <person name="Mooney P."/>
            <person name="Moule S."/>
            <person name="Mungall K.L."/>
            <person name="Murphy L.D."/>
            <person name="Niblett D."/>
            <person name="Odell C."/>
            <person name="Oliver K."/>
            <person name="O'Neil S."/>
            <person name="Pearson D."/>
            <person name="Quail M.A."/>
            <person name="Rabbinowitsch E."/>
            <person name="Rutherford K.M."/>
            <person name="Rutter S."/>
            <person name="Saunders D."/>
            <person name="Seeger K."/>
            <person name="Sharp S."/>
            <person name="Skelton J."/>
            <person name="Simmonds M.N."/>
            <person name="Squares R."/>
            <person name="Squares S."/>
            <person name="Stevens K."/>
            <person name="Taylor K."/>
            <person name="Taylor R.G."/>
            <person name="Tivey A."/>
            <person name="Walsh S.V."/>
            <person name="Warren T."/>
            <person name="Whitehead S."/>
            <person name="Woodward J.R."/>
            <person name="Volckaert G."/>
            <person name="Aert R."/>
            <person name="Robben J."/>
            <person name="Grymonprez B."/>
            <person name="Weltjens I."/>
            <person name="Vanstreels E."/>
            <person name="Rieger M."/>
            <person name="Schaefer M."/>
            <person name="Mueller-Auer S."/>
            <person name="Gabel C."/>
            <person name="Fuchs M."/>
            <person name="Duesterhoeft A."/>
            <person name="Fritzc C."/>
            <person name="Holzer E."/>
            <person name="Moestl D."/>
            <person name="Hilbert H."/>
            <person name="Borzym K."/>
            <person name="Langer I."/>
            <person name="Beck A."/>
            <person name="Lehrach H."/>
            <person name="Reinhardt R."/>
            <person name="Pohl T.M."/>
            <person name="Eger P."/>
            <person name="Zimmermann W."/>
            <person name="Wedler H."/>
            <person name="Wambutt R."/>
            <person name="Purnelle B."/>
            <person name="Goffeau A."/>
            <person name="Cadieu E."/>
            <person name="Dreano S."/>
            <person name="Gloux S."/>
            <person name="Lelaure V."/>
            <person name="Mottier S."/>
            <person name="Galibert F."/>
            <person name="Aves S.J."/>
            <person name="Xiang Z."/>
            <person name="Hunt C."/>
            <person name="Moore K."/>
            <person name="Hurst S.M."/>
            <person name="Lucas M."/>
            <person name="Rochet M."/>
            <person name="Gaillardin C."/>
            <person name="Tallada V.A."/>
            <person name="Garzon A."/>
            <person name="Thode G."/>
            <person name="Daga R.R."/>
            <person name="Cruzado L."/>
            <person name="Jimenez J."/>
            <person name="Sanchez M."/>
            <person name="del Rey F."/>
            <person name="Benito J."/>
            <person name="Dominguez A."/>
            <person name="Revuelta J.L."/>
            <person name="Moreno S."/>
            <person name="Armstrong J."/>
            <person name="Forsburg S.L."/>
            <person name="Cerutti L."/>
            <person name="Lowe T."/>
            <person name="McCombie W.R."/>
            <person name="Paulsen I."/>
            <person name="Potashkin J."/>
            <person name="Shpakovski G.V."/>
            <person name="Ussery D."/>
            <person name="Barrell B.G."/>
            <person name="Nurse P."/>
        </authorList>
    </citation>
    <scope>NUCLEOTIDE SEQUENCE [LARGE SCALE GENOMIC DNA]</scope>
    <source>
        <strain>972 / ATCC 24843</strain>
    </source>
</reference>
<reference key="2">
    <citation type="journal article" date="2006" name="Nat. Biotechnol.">
        <title>ORFeome cloning and global analysis of protein localization in the fission yeast Schizosaccharomyces pombe.</title>
        <authorList>
            <person name="Matsuyama A."/>
            <person name="Arai R."/>
            <person name="Yashiroda Y."/>
            <person name="Shirai A."/>
            <person name="Kamata A."/>
            <person name="Sekido S."/>
            <person name="Kobayashi Y."/>
            <person name="Hashimoto A."/>
            <person name="Hamamoto M."/>
            <person name="Hiraoka Y."/>
            <person name="Horinouchi S."/>
            <person name="Yoshida M."/>
        </authorList>
    </citation>
    <scope>SUBCELLULAR LOCATION [LARGE SCALE ANALYSIS]</scope>
</reference>
<reference key="3">
    <citation type="journal article" date="2008" name="J. Proteome Res.">
        <title>Phosphoproteome analysis of fission yeast.</title>
        <authorList>
            <person name="Wilson-Grady J.T."/>
            <person name="Villen J."/>
            <person name="Gygi S.P."/>
        </authorList>
    </citation>
    <scope>PHOSPHORYLATION [LARGE SCALE ANALYSIS] AT SER-519; THR-523; THR-526; SER-527; SER-528; SER-529 AND SER-537</scope>
    <scope>IDENTIFICATION BY MASS SPECTROMETRY</scope>
</reference>
<protein>
    <recommendedName>
        <fullName>Probable high-affinity hexose transporter ght8, mitochondrial</fullName>
        <shortName>Hexose transporter 8</shortName>
    </recommendedName>
</protein>
<proteinExistence type="evidence at protein level"/>
<gene>
    <name type="primary">ght8</name>
    <name type="ORF">SPCC548.06c</name>
</gene>
<keyword id="KW-0472">Membrane</keyword>
<keyword id="KW-0496">Mitochondrion</keyword>
<keyword id="KW-0597">Phosphoprotein</keyword>
<keyword id="KW-1185">Reference proteome</keyword>
<keyword id="KW-0809">Transit peptide</keyword>
<keyword id="KW-0812">Transmembrane</keyword>
<keyword id="KW-1133">Transmembrane helix</keyword>
<keyword id="KW-0813">Transport</keyword>
<organism>
    <name type="scientific">Schizosaccharomyces pombe (strain 972 / ATCC 24843)</name>
    <name type="common">Fission yeast</name>
    <dbReference type="NCBI Taxonomy" id="284812"/>
    <lineage>
        <taxon>Eukaryota</taxon>
        <taxon>Fungi</taxon>
        <taxon>Dikarya</taxon>
        <taxon>Ascomycota</taxon>
        <taxon>Taphrinomycotina</taxon>
        <taxon>Schizosaccharomycetes</taxon>
        <taxon>Schizosaccharomycetales</taxon>
        <taxon>Schizosaccharomycetaceae</taxon>
        <taxon>Schizosaccharomyces</taxon>
    </lineage>
</organism>